<accession>P37199</accession>
<keyword id="KW-0903">Direct protein sequencing</keyword>
<keyword id="KW-1015">Disulfide bond</keyword>
<keyword id="KW-0325">Glycoprotein</keyword>
<keyword id="KW-1017">Isopeptide bond</keyword>
<keyword id="KW-0472">Membrane</keyword>
<keyword id="KW-0509">mRNA transport</keyword>
<keyword id="KW-0906">Nuclear pore complex</keyword>
<keyword id="KW-0539">Nucleus</keyword>
<keyword id="KW-0597">Phosphoprotein</keyword>
<keyword id="KW-0653">Protein transport</keyword>
<keyword id="KW-1185">Reference proteome</keyword>
<keyword id="KW-0811">Translocation</keyword>
<keyword id="KW-0813">Transport</keyword>
<keyword id="KW-0832">Ubl conjugation</keyword>
<feature type="chain" id="PRO_0000204846" description="Nuclear pore complex protein Nup155">
    <location>
        <begin position="1"/>
        <end position="1390"/>
    </location>
</feature>
<feature type="region of interest" description="Disordered" evidence="4">
    <location>
        <begin position="598"/>
        <end position="632"/>
    </location>
</feature>
<feature type="region of interest" description="Disordered" evidence="4">
    <location>
        <begin position="984"/>
        <end position="1011"/>
    </location>
</feature>
<feature type="modified residue" description="Phosphoserine" evidence="2">
    <location>
        <position position="1056"/>
    </location>
</feature>
<feature type="glycosylation site" description="O-linked (GlcNAc) serine" evidence="5">
    <location>
        <position position="525"/>
    </location>
</feature>
<feature type="cross-link" description="Glycyl lysine isopeptide (Lys-Gly) (interchain with G-Cter in SUMO2)" evidence="2">
    <location>
        <position position="739"/>
    </location>
</feature>
<reference key="1">
    <citation type="journal article" date="1993" name="J. Cell Biol.">
        <title>Nup155 is a novel nuclear pore complex protein that contains neither repetitive sequence motifs nor reacts with WGA.</title>
        <authorList>
            <person name="Radu A."/>
            <person name="Blobel G."/>
            <person name="Wozniak R.W."/>
        </authorList>
    </citation>
    <scope>NUCLEOTIDE SEQUENCE [MRNA]</scope>
    <scope>PARTIAL PROTEIN SEQUENCE</scope>
    <source>
        <strain>Sprague-Dawley</strain>
        <tissue>Liver</tissue>
    </source>
</reference>
<reference key="2">
    <citation type="journal article" date="2002" name="Mol. Cell. Proteomics">
        <title>Mapping sites of O-GlcNAc modification using affinity tags for serine and threonine post-translational modifications.</title>
        <authorList>
            <person name="Wells L."/>
            <person name="Vosseller K."/>
            <person name="Cole R.N."/>
            <person name="Cronshaw J.M."/>
            <person name="Matunis M.J."/>
            <person name="Hart G.W."/>
        </authorList>
    </citation>
    <scope>GLYCOSYLATION AT SER-525</scope>
</reference>
<reference key="3">
    <citation type="journal article" date="2005" name="Mol. Biol. Cell">
        <title>Vertebrate Nup53 interacts with the nuclear lamina and is required for the assembly of a Nup93-containing complex.</title>
        <authorList>
            <person name="Hawryluk-Gara L.A."/>
            <person name="Shibuya E.K."/>
            <person name="Wozniak R.W."/>
        </authorList>
    </citation>
    <scope>SUBCELLULAR LOCATION</scope>
    <scope>IDENTIFICATION IN A COMPLEX WITH LAMIN B; NUP35; NUP93 AND NUP155</scope>
</reference>
<comment type="function">
    <text evidence="3">Essential component of nuclear pore complex. Could be essessential for embryogenesis (By similarity). Nucleoporins may be involved both in binding and translocating proteins during nucleocytoplasmic transport.</text>
</comment>
<comment type="subunit">
    <text evidence="1 6">Interacts with GLE1. Able to form a heterotrimer with GLE1 and NUP42 in vitro (By similarity). Forms a complex with NUP35, NUP93, NUP205 and lamin B.</text>
</comment>
<comment type="subcellular location">
    <subcellularLocation>
        <location evidence="6">Nucleus</location>
        <location evidence="6">Nuclear pore complex</location>
    </subcellularLocation>
    <subcellularLocation>
        <location evidence="6">Nucleus membrane</location>
        <topology evidence="6">Peripheral membrane protein</topology>
        <orientation evidence="6">Cytoplasmic side</orientation>
    </subcellularLocation>
    <subcellularLocation>
        <location evidence="6">Nucleus membrane</location>
        <topology evidence="6">Peripheral membrane protein</topology>
        <orientation evidence="6">Nucleoplasmic side</orientation>
    </subcellularLocation>
    <text>In mitosis, assumes a diffuse cytoplasmic distribution probably as a monomer, before reversing back into a punctate nuclear surface localization at the end of mitosis.</text>
</comment>
<comment type="PTM">
    <text>Phosphorylated. Phosphorylation and dephosphorylation may be important for the function of NUP155 and may play a role in the reversible disassembly of the nuclear pore complex during mitosis.</text>
</comment>
<comment type="PTM">
    <text evidence="1">Disulfide-linked to NUP62. The inner channel of the NPC has a different redox environment from the cytoplasm and allows the formation of interchain disulfide bonds between some nucleoporins, the significant increase of these linkages upon oxidative stress reduces the permeability of the NPC (By similarity).</text>
</comment>
<comment type="similarity">
    <text evidence="7">Belongs to the non-repetitive/WGA-negative nucleoporin family.</text>
</comment>
<name>NU155_RAT</name>
<organism>
    <name type="scientific">Rattus norvegicus</name>
    <name type="common">Rat</name>
    <dbReference type="NCBI Taxonomy" id="10116"/>
    <lineage>
        <taxon>Eukaryota</taxon>
        <taxon>Metazoa</taxon>
        <taxon>Chordata</taxon>
        <taxon>Craniata</taxon>
        <taxon>Vertebrata</taxon>
        <taxon>Euteleostomi</taxon>
        <taxon>Mammalia</taxon>
        <taxon>Eutheria</taxon>
        <taxon>Euarchontoglires</taxon>
        <taxon>Glires</taxon>
        <taxon>Rodentia</taxon>
        <taxon>Myomorpha</taxon>
        <taxon>Muroidea</taxon>
        <taxon>Muridae</taxon>
        <taxon>Murinae</taxon>
        <taxon>Rattus</taxon>
    </lineage>
</organism>
<dbReference type="EMBL" id="Z21780">
    <property type="protein sequence ID" value="CAA79848.1"/>
    <property type="molecule type" value="mRNA"/>
</dbReference>
<dbReference type="PIR" id="A45455">
    <property type="entry name" value="A45455"/>
</dbReference>
<dbReference type="RefSeq" id="NP_446404.1">
    <property type="nucleotide sequence ID" value="NM_053952.1"/>
</dbReference>
<dbReference type="SMR" id="P37199"/>
<dbReference type="BioGRID" id="250622">
    <property type="interactions" value="1"/>
</dbReference>
<dbReference type="CORUM" id="P37199"/>
<dbReference type="FunCoup" id="P37199">
    <property type="interactions" value="4282"/>
</dbReference>
<dbReference type="STRING" id="10116.ENSRNOP00000074340"/>
<dbReference type="GlyCosmos" id="P37199">
    <property type="glycosylation" value="1 site, No reported glycans"/>
</dbReference>
<dbReference type="GlyGen" id="P37199">
    <property type="glycosylation" value="3 sites, 1 O-linked glycan (1 site)"/>
</dbReference>
<dbReference type="iPTMnet" id="P37199"/>
<dbReference type="PhosphoSitePlus" id="P37199"/>
<dbReference type="jPOST" id="P37199"/>
<dbReference type="PaxDb" id="10116-ENSRNOP00000042749"/>
<dbReference type="GeneID" id="117021"/>
<dbReference type="KEGG" id="rno:117021"/>
<dbReference type="AGR" id="RGD:621199"/>
<dbReference type="CTD" id="9631"/>
<dbReference type="RGD" id="621199">
    <property type="gene designation" value="Nup155"/>
</dbReference>
<dbReference type="eggNOG" id="KOG1900">
    <property type="taxonomic scope" value="Eukaryota"/>
</dbReference>
<dbReference type="InParanoid" id="P37199"/>
<dbReference type="PhylomeDB" id="P37199"/>
<dbReference type="Reactome" id="R-RNO-159227">
    <property type="pathway name" value="Transport of the SLBP independent Mature mRNA"/>
</dbReference>
<dbReference type="Reactome" id="R-RNO-159230">
    <property type="pathway name" value="Transport of the SLBP Dependant Mature mRNA"/>
</dbReference>
<dbReference type="Reactome" id="R-RNO-159231">
    <property type="pathway name" value="Transport of Mature mRNA Derived from an Intronless Transcript"/>
</dbReference>
<dbReference type="Reactome" id="R-RNO-159236">
    <property type="pathway name" value="Transport of Mature mRNA derived from an Intron-Containing Transcript"/>
</dbReference>
<dbReference type="Reactome" id="R-RNO-170822">
    <property type="pathway name" value="Regulation of Glucokinase by Glucokinase Regulatory Protein"/>
</dbReference>
<dbReference type="Reactome" id="R-RNO-191859">
    <property type="pathway name" value="snRNP Assembly"/>
</dbReference>
<dbReference type="Reactome" id="R-RNO-3108214">
    <property type="pathway name" value="SUMOylation of DNA damage response and repair proteins"/>
</dbReference>
<dbReference type="Reactome" id="R-RNO-3232142">
    <property type="pathway name" value="SUMOylation of ubiquitinylation proteins"/>
</dbReference>
<dbReference type="Reactome" id="R-RNO-3301854">
    <property type="pathway name" value="Nuclear Pore Complex (NPC) Disassembly"/>
</dbReference>
<dbReference type="Reactome" id="R-RNO-3371453">
    <property type="pathway name" value="Regulation of HSF1-mediated heat shock response"/>
</dbReference>
<dbReference type="Reactome" id="R-RNO-4085377">
    <property type="pathway name" value="SUMOylation of SUMOylation proteins"/>
</dbReference>
<dbReference type="Reactome" id="R-RNO-4551638">
    <property type="pathway name" value="SUMOylation of chromatin organization proteins"/>
</dbReference>
<dbReference type="Reactome" id="R-RNO-4570464">
    <property type="pathway name" value="SUMOylation of RNA binding proteins"/>
</dbReference>
<dbReference type="Reactome" id="R-RNO-4615885">
    <property type="pathway name" value="SUMOylation of DNA replication proteins"/>
</dbReference>
<dbReference type="Reactome" id="R-RNO-5578749">
    <property type="pathway name" value="Transcriptional regulation by small RNAs"/>
</dbReference>
<dbReference type="Reactome" id="R-RNO-9615933">
    <property type="pathway name" value="Postmitotic nuclear pore complex (NPC) reformation"/>
</dbReference>
<dbReference type="PRO" id="PR:P37199"/>
<dbReference type="Proteomes" id="UP000002494">
    <property type="component" value="Unplaced"/>
</dbReference>
<dbReference type="GO" id="GO:0005635">
    <property type="term" value="C:nuclear envelope"/>
    <property type="evidence" value="ECO:0000314"/>
    <property type="project" value="RGD"/>
</dbReference>
<dbReference type="GO" id="GO:0031965">
    <property type="term" value="C:nuclear membrane"/>
    <property type="evidence" value="ECO:0007669"/>
    <property type="project" value="UniProtKB-SubCell"/>
</dbReference>
<dbReference type="GO" id="GO:0044611">
    <property type="term" value="C:nuclear pore inner ring"/>
    <property type="evidence" value="ECO:0000318"/>
    <property type="project" value="GO_Central"/>
</dbReference>
<dbReference type="GO" id="GO:0017056">
    <property type="term" value="F:structural constituent of nuclear pore"/>
    <property type="evidence" value="ECO:0000318"/>
    <property type="project" value="GO_Central"/>
</dbReference>
<dbReference type="GO" id="GO:0086014">
    <property type="term" value="P:atrial cardiac muscle cell action potential"/>
    <property type="evidence" value="ECO:0000266"/>
    <property type="project" value="RGD"/>
</dbReference>
<dbReference type="GO" id="GO:0035196">
    <property type="term" value="P:miRNA processing"/>
    <property type="evidence" value="ECO:0000266"/>
    <property type="project" value="RGD"/>
</dbReference>
<dbReference type="GO" id="GO:0006406">
    <property type="term" value="P:mRNA export from nucleus"/>
    <property type="evidence" value="ECO:0000266"/>
    <property type="project" value="RGD"/>
</dbReference>
<dbReference type="GO" id="GO:0006998">
    <property type="term" value="P:nuclear envelope organization"/>
    <property type="evidence" value="ECO:0000266"/>
    <property type="project" value="RGD"/>
</dbReference>
<dbReference type="GO" id="GO:0006606">
    <property type="term" value="P:protein import into nucleus"/>
    <property type="evidence" value="ECO:0000266"/>
    <property type="project" value="RGD"/>
</dbReference>
<dbReference type="GO" id="GO:0036228">
    <property type="term" value="P:protein localization to nuclear inner membrane"/>
    <property type="evidence" value="ECO:0000318"/>
    <property type="project" value="GO_Central"/>
</dbReference>
<dbReference type="GO" id="GO:0034504">
    <property type="term" value="P:protein localization to nucleus"/>
    <property type="evidence" value="ECO:0000266"/>
    <property type="project" value="RGD"/>
</dbReference>
<dbReference type="GO" id="GO:0006405">
    <property type="term" value="P:RNA export from nucleus"/>
    <property type="evidence" value="ECO:0000318"/>
    <property type="project" value="GO_Central"/>
</dbReference>
<dbReference type="GO" id="GO:0000972">
    <property type="term" value="P:transcription-dependent tethering of RNA polymerase II gene DNA at nuclear periphery"/>
    <property type="evidence" value="ECO:0000318"/>
    <property type="project" value="GO_Central"/>
</dbReference>
<dbReference type="FunFam" id="1.25.40.450:FF:000001">
    <property type="entry name" value="Nuclear pore complex protein"/>
    <property type="match status" value="1"/>
</dbReference>
<dbReference type="FunFam" id="1.20.120.1880:FF:000001">
    <property type="entry name" value="Nuclear pore complex protein Nup155"/>
    <property type="match status" value="1"/>
</dbReference>
<dbReference type="FunFam" id="1.25.40.440:FF:000001">
    <property type="entry name" value="Nuclear pore complex subunit"/>
    <property type="match status" value="1"/>
</dbReference>
<dbReference type="Gene3D" id="1.20.58.1780">
    <property type="match status" value="1"/>
</dbReference>
<dbReference type="Gene3D" id="1.20.120.1880">
    <property type="entry name" value="Nucleoporin, helical C-terminal domain"/>
    <property type="match status" value="1"/>
</dbReference>
<dbReference type="Gene3D" id="1.25.40.440">
    <property type="entry name" value="Nucleoporin, helical domain, central subdomain"/>
    <property type="match status" value="1"/>
</dbReference>
<dbReference type="Gene3D" id="1.25.40.450">
    <property type="entry name" value="Nucleoporin, helical domain, N-terminal subdomain"/>
    <property type="match status" value="1"/>
</dbReference>
<dbReference type="InterPro" id="IPR007187">
    <property type="entry name" value="Nucleoporin_Nup133/Nup155_C"/>
</dbReference>
<dbReference type="InterPro" id="IPR014908">
    <property type="entry name" value="Nucleoporin_Nup133/Nup155_N"/>
</dbReference>
<dbReference type="InterPro" id="IPR004870">
    <property type="entry name" value="Nucleoporin_Nup155"/>
</dbReference>
<dbReference type="InterPro" id="IPR042533">
    <property type="entry name" value="Nucleoporin_Nup155_C_1"/>
</dbReference>
<dbReference type="InterPro" id="IPR042537">
    <property type="entry name" value="Nucleoporin_Nup155_C_2"/>
</dbReference>
<dbReference type="InterPro" id="IPR042538">
    <property type="entry name" value="Nucleoporin_Nup155_C_3"/>
</dbReference>
<dbReference type="PANTHER" id="PTHR10350">
    <property type="entry name" value="NUCLEAR PORE COMPLEX PROTEIN NUP155"/>
    <property type="match status" value="1"/>
</dbReference>
<dbReference type="PANTHER" id="PTHR10350:SF6">
    <property type="entry name" value="NUCLEAR PORE COMPLEX PROTEIN NUP155"/>
    <property type="match status" value="1"/>
</dbReference>
<dbReference type="Pfam" id="PF03177">
    <property type="entry name" value="Nucleoporin_C"/>
    <property type="match status" value="1"/>
</dbReference>
<dbReference type="Pfam" id="PF08801">
    <property type="entry name" value="Nucleoporin_N"/>
    <property type="match status" value="1"/>
</dbReference>
<gene>
    <name type="primary">Nup155</name>
</gene>
<protein>
    <recommendedName>
        <fullName>Nuclear pore complex protein Nup155</fullName>
    </recommendedName>
    <alternativeName>
        <fullName>155 kDa nucleoporin</fullName>
    </alternativeName>
    <alternativeName>
        <fullName>Nucleoporin Nup155</fullName>
    </alternativeName>
    <alternativeName>
        <fullName>P140</fullName>
    </alternativeName>
</protein>
<sequence length="1390" mass="155003">MPSMLGSMMVASTSAPSLQEALENAGRLIDRQLQEDRMYPDLSELLMVSAPNSPTVSGMSDMDYPLQGPGLLSVPSLPEISTIRRVPLRLSWLNSLDTCSVTAMMGVFPPISRAWLTIDSDIFMWNYEDGGDLAYFDGLSETILAVGLVKPKAGIFQPHVRHLLVLATPVDIVILGLSYANVQTGSGILNDSVCGGLQLLPDPLYSLPTDNTYLLTITSTDNGRIFLAGKDGCLYEVAYQAEAGWFSQRCRKINHSKSSLSFLVPSLLQFTFSEDDPIVQIEIDNSRNILYTRSEKGVIQVYDLGHDGQGMSRVASVSQNAIVCAAGNIARTIDRSVFKPIVQIAVIENSESLDCQLLAVTHAGVRLYFSTCPFRQPLARPNTLTLVHVRLPPGFSASSTVEKPSKVHKALYSKGILLMTASENEDNDILWCVNHDTFPFQKPMMETQMTTRVDGHSWALSAIDELKVDKIITPLNKDHIPITDSPVVVQQHMLPPKKFVLLSAQGSLMFHKLRPVDQLRHLLVSNVGGDGEEIERFFKLHQEDQACATCLILACSTAACDREVSAWATRAFFRYGGEAQMRFPATLPTPSNVGPILGSPMYSSSPVPTGSPYPNPSSLGTPSHGAQPPTMSTPMSAVGNPAMQAASLSGLTGPEIVYSGKHNGICIYFSRIMGNIWDASLVVERVFKSSNREITAIESSVPIQLLESVLQELKGLQEFLDRNSQFSGGPLGNPNTTAKVQQRLLGVMRPENGNTQQMQQELQRKFHEAQLSEKISLQAIQQLVRKSYQALALWKLLCEHQFTVIVGELQKEFQEQLKITTFKDLVIREKEVTGALIASLINCYIRDNAAVDGISLHLQDTCPLLYSTDDAVCSKANELLQRSRQVQSKSERERMLRESLKEYQKISNQVDLPSVCAQYRQVRFYEGVVELSLTAAEKKDPQGLGLHFYKHGEPEEDVVGLQTFQERLNSYKCITDTLQELVNQSKAAPQSPSVPKKPGPPVLSSDPNMLSNEEAGHHFEQMLKLAQRSKDELFSIALYNWLIQADLADKLLQIASPFLEPHLVRMAKVDQNRVRYMDLLWRYYEKNRSFSSAARVLSKLADMHSTEISLQQRLEYIARAILSAKSSTAISSIAADGEFLHELEEKMEVARIQLQIQETLQRQYSHHSSVQDAISQLDSELMDITKLYGEFADPFKLAECKLAIIHCAGYSDPILVHTLWQDIIEKELSDSVTLSSSDRMHALSLKLVLLGKIYAGTPRFFPLDFIVQFLEQQVCTLNWDVGFVIQTMNEIGVPLPRLLEVYDQLFKSRDPFWNRVKSPLHLLDCIHVLLTRYVENPSLVLNCERRRFTNLCLDAVCGYLVELQSMSSSVAVQAITGNFKSLQAKLERLH</sequence>
<proteinExistence type="evidence at protein level"/>
<evidence type="ECO:0000250" key="1"/>
<evidence type="ECO:0000250" key="2">
    <source>
        <dbReference type="UniProtKB" id="O75694"/>
    </source>
</evidence>
<evidence type="ECO:0000250" key="3">
    <source>
        <dbReference type="UniProtKB" id="Q99P88"/>
    </source>
</evidence>
<evidence type="ECO:0000256" key="4">
    <source>
        <dbReference type="SAM" id="MobiDB-lite"/>
    </source>
</evidence>
<evidence type="ECO:0000269" key="5">
    <source>
    </source>
</evidence>
<evidence type="ECO:0000269" key="6">
    <source>
    </source>
</evidence>
<evidence type="ECO:0000305" key="7"/>